<accession>B5R9U3</accession>
<gene>
    <name evidence="1" type="primary">prfC</name>
    <name type="ordered locus">SG4387</name>
</gene>
<protein>
    <recommendedName>
        <fullName evidence="1">Peptide chain release factor 3</fullName>
        <shortName evidence="1">RF-3</shortName>
    </recommendedName>
</protein>
<organism>
    <name type="scientific">Salmonella gallinarum (strain 287/91 / NCTC 13346)</name>
    <dbReference type="NCBI Taxonomy" id="550538"/>
    <lineage>
        <taxon>Bacteria</taxon>
        <taxon>Pseudomonadati</taxon>
        <taxon>Pseudomonadota</taxon>
        <taxon>Gammaproteobacteria</taxon>
        <taxon>Enterobacterales</taxon>
        <taxon>Enterobacteriaceae</taxon>
        <taxon>Salmonella</taxon>
    </lineage>
</organism>
<evidence type="ECO:0000255" key="1">
    <source>
        <dbReference type="HAMAP-Rule" id="MF_00072"/>
    </source>
</evidence>
<name>RF3_SALG2</name>
<proteinExistence type="inferred from homology"/>
<reference key="1">
    <citation type="journal article" date="2008" name="Genome Res.">
        <title>Comparative genome analysis of Salmonella enteritidis PT4 and Salmonella gallinarum 287/91 provides insights into evolutionary and host adaptation pathways.</title>
        <authorList>
            <person name="Thomson N.R."/>
            <person name="Clayton D.J."/>
            <person name="Windhorst D."/>
            <person name="Vernikos G."/>
            <person name="Davidson S."/>
            <person name="Churcher C."/>
            <person name="Quail M.A."/>
            <person name="Stevens M."/>
            <person name="Jones M.A."/>
            <person name="Watson M."/>
            <person name="Barron A."/>
            <person name="Layton A."/>
            <person name="Pickard D."/>
            <person name="Kingsley R.A."/>
            <person name="Bignell A."/>
            <person name="Clark L."/>
            <person name="Harris B."/>
            <person name="Ormond D."/>
            <person name="Abdellah Z."/>
            <person name="Brooks K."/>
            <person name="Cherevach I."/>
            <person name="Chillingworth T."/>
            <person name="Woodward J."/>
            <person name="Norberczak H."/>
            <person name="Lord A."/>
            <person name="Arrowsmith C."/>
            <person name="Jagels K."/>
            <person name="Moule S."/>
            <person name="Mungall K."/>
            <person name="Saunders M."/>
            <person name="Whitehead S."/>
            <person name="Chabalgoity J.A."/>
            <person name="Maskell D."/>
            <person name="Humphreys T."/>
            <person name="Roberts M."/>
            <person name="Barrow P.A."/>
            <person name="Dougan G."/>
            <person name="Parkhill J."/>
        </authorList>
    </citation>
    <scope>NUCLEOTIDE SEQUENCE [LARGE SCALE GENOMIC DNA]</scope>
    <source>
        <strain>287/91 / NCTC 13346</strain>
    </source>
</reference>
<feature type="chain" id="PRO_1000092496" description="Peptide chain release factor 3">
    <location>
        <begin position="1"/>
        <end position="529"/>
    </location>
</feature>
<feature type="domain" description="tr-type G">
    <location>
        <begin position="11"/>
        <end position="280"/>
    </location>
</feature>
<feature type="binding site" evidence="1">
    <location>
        <begin position="20"/>
        <end position="27"/>
    </location>
    <ligand>
        <name>GTP</name>
        <dbReference type="ChEBI" id="CHEBI:37565"/>
    </ligand>
</feature>
<feature type="binding site" evidence="1">
    <location>
        <begin position="88"/>
        <end position="92"/>
    </location>
    <ligand>
        <name>GTP</name>
        <dbReference type="ChEBI" id="CHEBI:37565"/>
    </ligand>
</feature>
<feature type="binding site" evidence="1">
    <location>
        <begin position="142"/>
        <end position="145"/>
    </location>
    <ligand>
        <name>GTP</name>
        <dbReference type="ChEBI" id="CHEBI:37565"/>
    </ligand>
</feature>
<sequence length="529" mass="59575">MTLSPYLQEVAKRRTFAIISHPDAGKTTITEKVLLFGQAIQTAGTVKGRGSSQHAKSDWMEMEKQRGISITTSVMQFPYHDCLVNLLDTPGHEDFSEDTYRTLTAVDCCLMVIDAAKGVEDRTRKLMEVTRLRDTPILTFMNKLDRDIRDPMELLDEVENELKIGCAPITWPIGCGKLFKGVYHLYKDETYLYQTGKGHTIQEVRIVKGLNNPDLDAAVGEDLAQQLRDELELVQGASNEFDEELFLAGEITPVFFGTALGNFGVDHMLDGLVAWAPAPMPRQTDTRTVEASEEKFTGFVFKIQANMDPKHRDRVAFMRVVSGKYEKGMKLRQVRIGKDVVISDALTFMAGDRSHVEEAYPGDILGLHNHGTIQIGDTFTQGEMMKFTGIPNFAPELFRRIRLKDPLKQKQLLKGLVQLSEEGAVQVFRPISNNDLIVGAVGVLQFDVVVARLKSEYNVEAIYESVNVATARWVESADAKKFEEFKRKNETQLALDGGDNLTYIAPTMVNLNLTQERYPDVQFRKTREH</sequence>
<comment type="function">
    <text evidence="1">Increases the formation of ribosomal termination complexes and stimulates activities of RF-1 and RF-2. It binds guanine nucleotides and has strong preference for UGA stop codons. It may interact directly with the ribosome. The stimulation of RF-1 and RF-2 is significantly reduced by GTP and GDP, but not by GMP.</text>
</comment>
<comment type="subcellular location">
    <subcellularLocation>
        <location evidence="1">Cytoplasm</location>
    </subcellularLocation>
</comment>
<comment type="similarity">
    <text evidence="1">Belongs to the TRAFAC class translation factor GTPase superfamily. Classic translation factor GTPase family. PrfC subfamily.</text>
</comment>
<keyword id="KW-0963">Cytoplasm</keyword>
<keyword id="KW-0342">GTP-binding</keyword>
<keyword id="KW-0547">Nucleotide-binding</keyword>
<keyword id="KW-0648">Protein biosynthesis</keyword>
<dbReference type="EMBL" id="AM933173">
    <property type="protein sequence ID" value="CAR40149.1"/>
    <property type="molecule type" value="Genomic_DNA"/>
</dbReference>
<dbReference type="RefSeq" id="WP_000175964.1">
    <property type="nucleotide sequence ID" value="NC_011274.1"/>
</dbReference>
<dbReference type="SMR" id="B5R9U3"/>
<dbReference type="KEGG" id="seg:SG4387"/>
<dbReference type="HOGENOM" id="CLU_002794_2_1_6"/>
<dbReference type="Proteomes" id="UP000008321">
    <property type="component" value="Chromosome"/>
</dbReference>
<dbReference type="GO" id="GO:0005829">
    <property type="term" value="C:cytosol"/>
    <property type="evidence" value="ECO:0007669"/>
    <property type="project" value="TreeGrafter"/>
</dbReference>
<dbReference type="GO" id="GO:0005525">
    <property type="term" value="F:GTP binding"/>
    <property type="evidence" value="ECO:0007669"/>
    <property type="project" value="UniProtKB-UniRule"/>
</dbReference>
<dbReference type="GO" id="GO:0003924">
    <property type="term" value="F:GTPase activity"/>
    <property type="evidence" value="ECO:0007669"/>
    <property type="project" value="InterPro"/>
</dbReference>
<dbReference type="GO" id="GO:0097216">
    <property type="term" value="F:guanosine tetraphosphate binding"/>
    <property type="evidence" value="ECO:0007669"/>
    <property type="project" value="UniProtKB-ARBA"/>
</dbReference>
<dbReference type="GO" id="GO:0016150">
    <property type="term" value="F:translation release factor activity, codon nonspecific"/>
    <property type="evidence" value="ECO:0007669"/>
    <property type="project" value="TreeGrafter"/>
</dbReference>
<dbReference type="GO" id="GO:0016149">
    <property type="term" value="F:translation release factor activity, codon specific"/>
    <property type="evidence" value="ECO:0007669"/>
    <property type="project" value="UniProtKB-UniRule"/>
</dbReference>
<dbReference type="GO" id="GO:0006449">
    <property type="term" value="P:regulation of translational termination"/>
    <property type="evidence" value="ECO:0007669"/>
    <property type="project" value="UniProtKB-UniRule"/>
</dbReference>
<dbReference type="CDD" id="cd04169">
    <property type="entry name" value="RF3"/>
    <property type="match status" value="1"/>
</dbReference>
<dbReference type="CDD" id="cd03689">
    <property type="entry name" value="RF3_II"/>
    <property type="match status" value="1"/>
</dbReference>
<dbReference type="CDD" id="cd16259">
    <property type="entry name" value="RF3_III"/>
    <property type="match status" value="1"/>
</dbReference>
<dbReference type="FunFam" id="2.40.30.10:FF:000040">
    <property type="entry name" value="Peptide chain release factor 3"/>
    <property type="match status" value="1"/>
</dbReference>
<dbReference type="FunFam" id="3.30.70.3280:FF:000001">
    <property type="entry name" value="Peptide chain release factor 3"/>
    <property type="match status" value="1"/>
</dbReference>
<dbReference type="FunFam" id="3.40.50.300:FF:000184">
    <property type="entry name" value="Peptide chain release factor 3"/>
    <property type="match status" value="1"/>
</dbReference>
<dbReference type="FunFam" id="3.40.50.300:FF:000253">
    <property type="entry name" value="Peptide chain release factor 3"/>
    <property type="match status" value="1"/>
</dbReference>
<dbReference type="Gene3D" id="3.40.50.300">
    <property type="entry name" value="P-loop containing nucleotide triphosphate hydrolases"/>
    <property type="match status" value="3"/>
</dbReference>
<dbReference type="Gene3D" id="3.30.70.3280">
    <property type="entry name" value="Peptide chain release factor 3, domain III"/>
    <property type="match status" value="1"/>
</dbReference>
<dbReference type="HAMAP" id="MF_00072">
    <property type="entry name" value="Rel_fac_3"/>
    <property type="match status" value="1"/>
</dbReference>
<dbReference type="InterPro" id="IPR053905">
    <property type="entry name" value="EF-G-like_DII"/>
</dbReference>
<dbReference type="InterPro" id="IPR035647">
    <property type="entry name" value="EFG_III/V"/>
</dbReference>
<dbReference type="InterPro" id="IPR031157">
    <property type="entry name" value="G_TR_CS"/>
</dbReference>
<dbReference type="InterPro" id="IPR027417">
    <property type="entry name" value="P-loop_NTPase"/>
</dbReference>
<dbReference type="InterPro" id="IPR004548">
    <property type="entry name" value="PrfC"/>
</dbReference>
<dbReference type="InterPro" id="IPR032090">
    <property type="entry name" value="RF3_C"/>
</dbReference>
<dbReference type="InterPro" id="IPR038467">
    <property type="entry name" value="RF3_dom_3_sf"/>
</dbReference>
<dbReference type="InterPro" id="IPR041732">
    <property type="entry name" value="RF3_GTP-bd"/>
</dbReference>
<dbReference type="InterPro" id="IPR005225">
    <property type="entry name" value="Small_GTP-bd"/>
</dbReference>
<dbReference type="InterPro" id="IPR000795">
    <property type="entry name" value="T_Tr_GTP-bd_dom"/>
</dbReference>
<dbReference type="InterPro" id="IPR009000">
    <property type="entry name" value="Transl_B-barrel_sf"/>
</dbReference>
<dbReference type="NCBIfam" id="TIGR00503">
    <property type="entry name" value="prfC"/>
    <property type="match status" value="1"/>
</dbReference>
<dbReference type="NCBIfam" id="NF001964">
    <property type="entry name" value="PRK00741.1"/>
    <property type="match status" value="1"/>
</dbReference>
<dbReference type="NCBIfam" id="TIGR00231">
    <property type="entry name" value="small_GTP"/>
    <property type="match status" value="1"/>
</dbReference>
<dbReference type="PANTHER" id="PTHR43556">
    <property type="entry name" value="PEPTIDE CHAIN RELEASE FACTOR RF3"/>
    <property type="match status" value="1"/>
</dbReference>
<dbReference type="PANTHER" id="PTHR43556:SF2">
    <property type="entry name" value="PEPTIDE CHAIN RELEASE FACTOR RF3"/>
    <property type="match status" value="1"/>
</dbReference>
<dbReference type="Pfam" id="PF22042">
    <property type="entry name" value="EF-G_D2"/>
    <property type="match status" value="1"/>
</dbReference>
<dbReference type="Pfam" id="PF00009">
    <property type="entry name" value="GTP_EFTU"/>
    <property type="match status" value="1"/>
</dbReference>
<dbReference type="Pfam" id="PF16658">
    <property type="entry name" value="RF3_C"/>
    <property type="match status" value="1"/>
</dbReference>
<dbReference type="PRINTS" id="PR00315">
    <property type="entry name" value="ELONGATNFCT"/>
</dbReference>
<dbReference type="SUPFAM" id="SSF54980">
    <property type="entry name" value="EF-G C-terminal domain-like"/>
    <property type="match status" value="1"/>
</dbReference>
<dbReference type="SUPFAM" id="SSF52540">
    <property type="entry name" value="P-loop containing nucleoside triphosphate hydrolases"/>
    <property type="match status" value="1"/>
</dbReference>
<dbReference type="SUPFAM" id="SSF50447">
    <property type="entry name" value="Translation proteins"/>
    <property type="match status" value="1"/>
</dbReference>
<dbReference type="PROSITE" id="PS00301">
    <property type="entry name" value="G_TR_1"/>
    <property type="match status" value="1"/>
</dbReference>
<dbReference type="PROSITE" id="PS51722">
    <property type="entry name" value="G_TR_2"/>
    <property type="match status" value="1"/>
</dbReference>